<reference key="1">
    <citation type="journal article" date="1996" name="Mol. Cell. Biol.">
        <title>The LIM domain-containing Dbm1 GTPase-activating protein is required for normal cellular morphogenesis in Saccharomyces cerevisiae.</title>
        <authorList>
            <person name="Chen G.-C."/>
            <person name="Zheng L."/>
            <person name="Chan C.S.M."/>
        </authorList>
    </citation>
    <scope>NUCLEOTIDE SEQUENCE [MRNA]</scope>
    <scope>MUTAGENESIS</scope>
    <source>
        <strain>ATCC 204508 / S288c</strain>
    </source>
</reference>
<reference key="2">
    <citation type="journal article" date="1995" name="Genes Dev.">
        <title>Mutation of RGA1, which encodes a putative GTPase-activating protein for the polarity-establishment protein Cdc42p, activates the pheromone-response pathway in the yeast Saccharomyces cerevisiae.</title>
        <authorList>
            <person name="Stevenson B.J."/>
            <person name="Ferguson B."/>
            <person name="de Virgilio C."/>
            <person name="Bi E."/>
            <person name="Pringle J.R."/>
            <person name="Ammerer G."/>
            <person name="Sprague G.F. Jr."/>
        </authorList>
    </citation>
    <scope>NUCLEOTIDE SEQUENCE [GENOMIC DNA]</scope>
    <source>
        <strain>ATCC 204508 / S288c</strain>
    </source>
</reference>
<reference key="3">
    <citation type="journal article" date="1996" name="Yeast">
        <title>Sequencing and analysis of 51 kb on the right arm of chromosome XV from Saccharomyces cerevisiae reveals 30 open reading frames.</title>
        <authorList>
            <person name="Wiemann S."/>
            <person name="Rechmann S."/>
            <person name="Benes V."/>
            <person name="Voss H."/>
            <person name="Schwager C."/>
            <person name="Vlcek C."/>
            <person name="Stegemann J."/>
            <person name="Zimmermann J."/>
            <person name="Erfle H."/>
            <person name="Paces V."/>
            <person name="Ansorge W."/>
        </authorList>
    </citation>
    <scope>NUCLEOTIDE SEQUENCE [GENOMIC DNA]</scope>
    <source>
        <strain>ATCC 96604 / S288c / FY1679</strain>
    </source>
</reference>
<reference key="4">
    <citation type="journal article" date="1997" name="Yeast">
        <title>DNA sequencing and analysis of 130 kb from yeast chromosome XV.</title>
        <authorList>
            <person name="Voss H."/>
            <person name="Benes V."/>
            <person name="Andrade M.A."/>
            <person name="Valencia A."/>
            <person name="Rechmann S."/>
            <person name="Teodoru C."/>
            <person name="Schwager C."/>
            <person name="Paces V."/>
            <person name="Sander C."/>
            <person name="Ansorge W."/>
        </authorList>
    </citation>
    <scope>NUCLEOTIDE SEQUENCE [LARGE SCALE GENOMIC DNA]</scope>
</reference>
<reference key="5">
    <citation type="journal article" date="2014" name="G3 (Bethesda)">
        <title>The reference genome sequence of Saccharomyces cerevisiae: Then and now.</title>
        <authorList>
            <person name="Engel S.R."/>
            <person name="Dietrich F.S."/>
            <person name="Fisk D.G."/>
            <person name="Binkley G."/>
            <person name="Balakrishnan R."/>
            <person name="Costanzo M.C."/>
            <person name="Dwight S.S."/>
            <person name="Hitz B.C."/>
            <person name="Karra K."/>
            <person name="Nash R.S."/>
            <person name="Weng S."/>
            <person name="Wong E.D."/>
            <person name="Lloyd P."/>
            <person name="Skrzypek M.S."/>
            <person name="Miyasato S.R."/>
            <person name="Simison M."/>
            <person name="Cherry J.M."/>
        </authorList>
    </citation>
    <scope>GENOME REANNOTATION</scope>
    <source>
        <strain>ATCC 204508 / S288c</strain>
    </source>
</reference>
<reference key="6">
    <citation type="journal article" date="1997" name="Nature">
        <title>The nucleotide sequence of Saccharomyces cerevisiae chromosome XV.</title>
        <authorList>
            <person name="Dujon B."/>
            <person name="Albermann K."/>
            <person name="Aldea M."/>
            <person name="Alexandraki D."/>
            <person name="Ansorge W."/>
            <person name="Arino J."/>
            <person name="Benes V."/>
            <person name="Bohn C."/>
            <person name="Bolotin-Fukuhara M."/>
            <person name="Bordonne R."/>
            <person name="Boyer J."/>
            <person name="Camasses A."/>
            <person name="Casamayor A."/>
            <person name="Casas C."/>
            <person name="Cheret G."/>
            <person name="Cziepluch C."/>
            <person name="Daignan-Fornier B."/>
            <person name="Dang V.-D."/>
            <person name="de Haan M."/>
            <person name="Delius H."/>
            <person name="Durand P."/>
            <person name="Fairhead C."/>
            <person name="Feldmann H."/>
            <person name="Gaillon L."/>
            <person name="Galisson F."/>
            <person name="Gamo F.-J."/>
            <person name="Gancedo C."/>
            <person name="Goffeau A."/>
            <person name="Goulding S.E."/>
            <person name="Grivell L.A."/>
            <person name="Habbig B."/>
            <person name="Hand N.J."/>
            <person name="Hani J."/>
            <person name="Hattenhorst U."/>
            <person name="Hebling U."/>
            <person name="Hernando Y."/>
            <person name="Herrero E."/>
            <person name="Heumann K."/>
            <person name="Hiesel R."/>
            <person name="Hilger F."/>
            <person name="Hofmann B."/>
            <person name="Hollenberg C.P."/>
            <person name="Hughes B."/>
            <person name="Jauniaux J.-C."/>
            <person name="Kalogeropoulos A."/>
            <person name="Katsoulou C."/>
            <person name="Kordes E."/>
            <person name="Lafuente M.J."/>
            <person name="Landt O."/>
            <person name="Louis E.J."/>
            <person name="Maarse A.C."/>
            <person name="Madania A."/>
            <person name="Mannhaupt G."/>
            <person name="Marck C."/>
            <person name="Martin R.P."/>
            <person name="Mewes H.-W."/>
            <person name="Michaux G."/>
            <person name="Paces V."/>
            <person name="Parle-McDermott A.G."/>
            <person name="Pearson B.M."/>
            <person name="Perrin A."/>
            <person name="Pettersson B."/>
            <person name="Poch O."/>
            <person name="Pohl T.M."/>
            <person name="Poirey R."/>
            <person name="Portetelle D."/>
            <person name="Pujol A."/>
            <person name="Purnelle B."/>
            <person name="Ramezani Rad M."/>
            <person name="Rechmann S."/>
            <person name="Schwager C."/>
            <person name="Schweizer M."/>
            <person name="Sor F."/>
            <person name="Sterky F."/>
            <person name="Tarassov I.A."/>
            <person name="Teodoru C."/>
            <person name="Tettelin H."/>
            <person name="Thierry A."/>
            <person name="Tobiasch E."/>
            <person name="Tzermia M."/>
            <person name="Uhlen M."/>
            <person name="Unseld M."/>
            <person name="Valens M."/>
            <person name="Vandenbol M."/>
            <person name="Vetter I."/>
            <person name="Vlcek C."/>
            <person name="Voet M."/>
            <person name="Volckaert G."/>
            <person name="Voss H."/>
            <person name="Wambutt R."/>
            <person name="Wedler H."/>
            <person name="Wiemann S."/>
            <person name="Winsor B."/>
            <person name="Wolfe K.H."/>
            <person name="Zollner A."/>
            <person name="Zumstein E."/>
            <person name="Kleine K."/>
        </authorList>
    </citation>
    <scope>NUCLEOTIDE SEQUENCE [LARGE SCALE GENOMIC DNA]</scope>
    <source>
        <strain>ATCC 204508 / S288c</strain>
    </source>
</reference>
<reference key="7">
    <citation type="journal article" date="1992" name="Proc. Natl. Acad. Sci. U.S.A.">
        <title>Dominant genetics using a yeast genomic library under the control of a strong inducible promoter.</title>
        <authorList>
            <person name="Ramer S.W."/>
            <person name="Elledge S.J."/>
            <person name="Davis R.W."/>
        </authorList>
    </citation>
    <scope>NUCLEOTIDE SEQUENCE [GENOMIC DNA] OF 570-639</scope>
    <source>
        <strain>S288c / SNY243</strain>
    </source>
</reference>
<reference key="8">
    <citation type="journal article" date="2003" name="Nature">
        <title>Global analysis of protein expression in yeast.</title>
        <authorList>
            <person name="Ghaemmaghami S."/>
            <person name="Huh W.-K."/>
            <person name="Bower K."/>
            <person name="Howson R.W."/>
            <person name="Belle A."/>
            <person name="Dephoure N."/>
            <person name="O'Shea E.K."/>
            <person name="Weissman J.S."/>
        </authorList>
    </citation>
    <scope>LEVEL OF PROTEIN EXPRESSION [LARGE SCALE ANALYSIS]</scope>
</reference>
<reference key="9">
    <citation type="journal article" date="2007" name="J. Proteome Res.">
        <title>Large-scale phosphorylation analysis of alpha-factor-arrested Saccharomyces cerevisiae.</title>
        <authorList>
            <person name="Li X."/>
            <person name="Gerber S.A."/>
            <person name="Rudner A.D."/>
            <person name="Beausoleil S.A."/>
            <person name="Haas W."/>
            <person name="Villen J."/>
            <person name="Elias J.E."/>
            <person name="Gygi S.P."/>
        </authorList>
    </citation>
    <scope>PHOSPHORYLATION [LARGE SCALE ANALYSIS] AT THR-278</scope>
    <scope>IDENTIFICATION BY MASS SPECTROMETRY [LARGE SCALE ANALYSIS]</scope>
    <source>
        <strain>ADR376</strain>
    </source>
</reference>
<reference key="10">
    <citation type="journal article" date="2008" name="Mol. Cell. Proteomics">
        <title>A multidimensional chromatography technology for in-depth phosphoproteome analysis.</title>
        <authorList>
            <person name="Albuquerque C.P."/>
            <person name="Smolka M.B."/>
            <person name="Payne S.H."/>
            <person name="Bafna V."/>
            <person name="Eng J."/>
            <person name="Zhou H."/>
        </authorList>
    </citation>
    <scope>PHOSPHORYLATION [LARGE SCALE ANALYSIS] AT THR-278</scope>
    <scope>IDENTIFICATION BY MASS SPECTROMETRY [LARGE SCALE ANALYSIS]</scope>
</reference>
<reference key="11">
    <citation type="journal article" date="2009" name="Science">
        <title>Global analysis of Cdk1 substrate phosphorylation sites provides insights into evolution.</title>
        <authorList>
            <person name="Holt L.J."/>
            <person name="Tuch B.B."/>
            <person name="Villen J."/>
            <person name="Johnson A.D."/>
            <person name="Gygi S.P."/>
            <person name="Morgan D.O."/>
        </authorList>
    </citation>
    <scope>PHOSPHORYLATION [LARGE SCALE ANALYSIS] AT THR-278; SER-291 AND THR-532</scope>
    <scope>IDENTIFICATION BY MASS SPECTROMETRY [LARGE SCALE ANALYSIS]</scope>
</reference>
<dbReference type="EMBL" id="U07421">
    <property type="protein sequence ID" value="AAA16875.1"/>
    <property type="molecule type" value="mRNA"/>
</dbReference>
<dbReference type="EMBL" id="X90950">
    <property type="protein sequence ID" value="CAA62445.1"/>
    <property type="molecule type" value="Genomic_DNA"/>
</dbReference>
<dbReference type="EMBL" id="X90518">
    <property type="protein sequence ID" value="CAA62108.1"/>
    <property type="molecule type" value="Genomic_DNA"/>
</dbReference>
<dbReference type="EMBL" id="X94335">
    <property type="protein sequence ID" value="CAA64046.1"/>
    <property type="molecule type" value="Genomic_DNA"/>
</dbReference>
<dbReference type="EMBL" id="Z75035">
    <property type="protein sequence ID" value="CAA99326.1"/>
    <property type="molecule type" value="Genomic_DNA"/>
</dbReference>
<dbReference type="EMBL" id="L02617">
    <property type="protein sequence ID" value="AAA35153.1"/>
    <property type="molecule type" value="Genomic_DNA"/>
</dbReference>
<dbReference type="EMBL" id="BK006948">
    <property type="protein sequence ID" value="DAA10901.1"/>
    <property type="molecule type" value="Genomic_DNA"/>
</dbReference>
<dbReference type="PIR" id="S48535">
    <property type="entry name" value="S48535"/>
</dbReference>
<dbReference type="RefSeq" id="NP_014770.1">
    <property type="nucleotide sequence ID" value="NM_001183546.1"/>
</dbReference>
<dbReference type="SMR" id="P39083"/>
<dbReference type="BioGRID" id="34522">
    <property type="interactions" value="150"/>
</dbReference>
<dbReference type="DIP" id="DIP-1559N"/>
<dbReference type="FunCoup" id="P39083">
    <property type="interactions" value="247"/>
</dbReference>
<dbReference type="IntAct" id="P39083">
    <property type="interactions" value="14"/>
</dbReference>
<dbReference type="MINT" id="P39083"/>
<dbReference type="STRING" id="4932.YOR127W"/>
<dbReference type="GlyGen" id="P39083">
    <property type="glycosylation" value="2 sites, 1 O-linked glycan (1 site)"/>
</dbReference>
<dbReference type="iPTMnet" id="P39083"/>
<dbReference type="PaxDb" id="4932-YOR127W"/>
<dbReference type="PeptideAtlas" id="P39083"/>
<dbReference type="EnsemblFungi" id="YOR127W_mRNA">
    <property type="protein sequence ID" value="YOR127W"/>
    <property type="gene ID" value="YOR127W"/>
</dbReference>
<dbReference type="GeneID" id="854294"/>
<dbReference type="KEGG" id="sce:YOR127W"/>
<dbReference type="AGR" id="SGD:S000005653"/>
<dbReference type="SGD" id="S000005653">
    <property type="gene designation" value="RGA1"/>
</dbReference>
<dbReference type="VEuPathDB" id="FungiDB:YOR127W"/>
<dbReference type="eggNOG" id="KOG1453">
    <property type="taxonomic scope" value="Eukaryota"/>
</dbReference>
<dbReference type="eggNOG" id="KOG1704">
    <property type="taxonomic scope" value="Eukaryota"/>
</dbReference>
<dbReference type="GeneTree" id="ENSGT01030000234635"/>
<dbReference type="HOGENOM" id="CLU_003874_1_0_1"/>
<dbReference type="InParanoid" id="P39083"/>
<dbReference type="OMA" id="RYAKTKR"/>
<dbReference type="OrthoDB" id="19923at2759"/>
<dbReference type="BioCyc" id="YEAST:G3O-33652-MONOMER"/>
<dbReference type="Reactome" id="R-SCE-9013148">
    <property type="pathway name" value="CDC42 GTPase cycle"/>
</dbReference>
<dbReference type="Reactome" id="R-SCE-9013405">
    <property type="pathway name" value="RHOD GTPase cycle"/>
</dbReference>
<dbReference type="Reactome" id="R-SCE-9013424">
    <property type="pathway name" value="RHOV GTPase cycle"/>
</dbReference>
<dbReference type="Reactome" id="R-SCE-9035034">
    <property type="pathway name" value="RHOF GTPase cycle"/>
</dbReference>
<dbReference type="BioGRID-ORCS" id="854294">
    <property type="hits" value="1 hit in 10 CRISPR screens"/>
</dbReference>
<dbReference type="PRO" id="PR:P39083"/>
<dbReference type="Proteomes" id="UP000002311">
    <property type="component" value="Chromosome XV"/>
</dbReference>
<dbReference type="RNAct" id="P39083">
    <property type="molecule type" value="protein"/>
</dbReference>
<dbReference type="GO" id="GO:0005938">
    <property type="term" value="C:cell cortex"/>
    <property type="evidence" value="ECO:0000318"/>
    <property type="project" value="GO_Central"/>
</dbReference>
<dbReference type="GO" id="GO:0032153">
    <property type="term" value="C:cell division site"/>
    <property type="evidence" value="ECO:0000318"/>
    <property type="project" value="GO_Central"/>
</dbReference>
<dbReference type="GO" id="GO:0051286">
    <property type="term" value="C:cell tip"/>
    <property type="evidence" value="ECO:0000318"/>
    <property type="project" value="GO_Central"/>
</dbReference>
<dbReference type="GO" id="GO:0071597">
    <property type="term" value="C:cellular birth scar"/>
    <property type="evidence" value="ECO:0000314"/>
    <property type="project" value="SGD"/>
</dbReference>
<dbReference type="GO" id="GO:0005933">
    <property type="term" value="C:cellular bud"/>
    <property type="evidence" value="ECO:0000318"/>
    <property type="project" value="GO_Central"/>
</dbReference>
<dbReference type="GO" id="GO:0005935">
    <property type="term" value="C:cellular bud neck"/>
    <property type="evidence" value="ECO:0007005"/>
    <property type="project" value="SGD"/>
</dbReference>
<dbReference type="GO" id="GO:0032177">
    <property type="term" value="C:cellular bud neck split septin rings"/>
    <property type="evidence" value="ECO:0000314"/>
    <property type="project" value="SGD"/>
</dbReference>
<dbReference type="GO" id="GO:0005621">
    <property type="term" value="C:cellular bud scar"/>
    <property type="evidence" value="ECO:0000314"/>
    <property type="project" value="SGD"/>
</dbReference>
<dbReference type="GO" id="GO:0005737">
    <property type="term" value="C:cytoplasm"/>
    <property type="evidence" value="ECO:0007005"/>
    <property type="project" value="SGD"/>
</dbReference>
<dbReference type="GO" id="GO:0005886">
    <property type="term" value="C:plasma membrane"/>
    <property type="evidence" value="ECO:0000318"/>
    <property type="project" value="GO_Central"/>
</dbReference>
<dbReference type="GO" id="GO:0030427">
    <property type="term" value="C:site of polarized growth"/>
    <property type="evidence" value="ECO:0000318"/>
    <property type="project" value="GO_Central"/>
</dbReference>
<dbReference type="GO" id="GO:0005096">
    <property type="term" value="F:GTPase activator activity"/>
    <property type="evidence" value="ECO:0000314"/>
    <property type="project" value="SGD"/>
</dbReference>
<dbReference type="GO" id="GO:0046872">
    <property type="term" value="F:metal ion binding"/>
    <property type="evidence" value="ECO:0007669"/>
    <property type="project" value="UniProtKB-KW"/>
</dbReference>
<dbReference type="GO" id="GO:0007015">
    <property type="term" value="P:actin filament organization"/>
    <property type="evidence" value="ECO:0000315"/>
    <property type="project" value="SGD"/>
</dbReference>
<dbReference type="GO" id="GO:0007120">
    <property type="term" value="P:axial cellular bud site selection"/>
    <property type="evidence" value="ECO:0000315"/>
    <property type="project" value="SGD"/>
</dbReference>
<dbReference type="GO" id="GO:0007118">
    <property type="term" value="P:budding cell apical bud growth"/>
    <property type="evidence" value="ECO:0000353"/>
    <property type="project" value="SGD"/>
</dbReference>
<dbReference type="GO" id="GO:0007119">
    <property type="term" value="P:budding cell isotropic bud growth"/>
    <property type="evidence" value="ECO:0000353"/>
    <property type="project" value="SGD"/>
</dbReference>
<dbReference type="GO" id="GO:0030010">
    <property type="term" value="P:establishment of cell polarity"/>
    <property type="evidence" value="ECO:0000315"/>
    <property type="project" value="SGD"/>
</dbReference>
<dbReference type="GO" id="GO:0001403">
    <property type="term" value="P:invasive growth in response to glucose limitation"/>
    <property type="evidence" value="ECO:0000353"/>
    <property type="project" value="SGD"/>
</dbReference>
<dbReference type="GO" id="GO:0000750">
    <property type="term" value="P:pheromone-dependent signal transduction involved in conjugation with cellular fusion"/>
    <property type="evidence" value="ECO:0000316"/>
    <property type="project" value="SGD"/>
</dbReference>
<dbReference type="GO" id="GO:2000222">
    <property type="term" value="P:positive regulation of pseudohyphal growth"/>
    <property type="evidence" value="ECO:0000353"/>
    <property type="project" value="SGD"/>
</dbReference>
<dbReference type="GO" id="GO:0031106">
    <property type="term" value="P:septin ring organization"/>
    <property type="evidence" value="ECO:0000316"/>
    <property type="project" value="SGD"/>
</dbReference>
<dbReference type="GO" id="GO:0007264">
    <property type="term" value="P:small GTPase-mediated signal transduction"/>
    <property type="evidence" value="ECO:0000318"/>
    <property type="project" value="GO_Central"/>
</dbReference>
<dbReference type="CDD" id="cd09394">
    <property type="entry name" value="LIM1_Rga"/>
    <property type="match status" value="1"/>
</dbReference>
<dbReference type="CDD" id="cd09395">
    <property type="entry name" value="LIM2_Rga"/>
    <property type="match status" value="1"/>
</dbReference>
<dbReference type="CDD" id="cd00159">
    <property type="entry name" value="RhoGAP"/>
    <property type="match status" value="1"/>
</dbReference>
<dbReference type="FunFam" id="1.10.555.10:FF:000057">
    <property type="entry name" value="Rho GTPase-activating protein"/>
    <property type="match status" value="1"/>
</dbReference>
<dbReference type="FunFam" id="2.10.110.10:FF:000115">
    <property type="entry name" value="Rho GTPase-activating protein"/>
    <property type="match status" value="1"/>
</dbReference>
<dbReference type="FunFam" id="2.10.110.10:FF:000123">
    <property type="entry name" value="Rho GTPase-activating protein"/>
    <property type="match status" value="1"/>
</dbReference>
<dbReference type="Gene3D" id="2.10.110.10">
    <property type="entry name" value="Cysteine Rich Protein"/>
    <property type="match status" value="2"/>
</dbReference>
<dbReference type="Gene3D" id="1.10.555.10">
    <property type="entry name" value="Rho GTPase activation protein"/>
    <property type="match status" value="1"/>
</dbReference>
<dbReference type="InterPro" id="IPR050729">
    <property type="entry name" value="Rho-GAP"/>
</dbReference>
<dbReference type="InterPro" id="IPR008936">
    <property type="entry name" value="Rho_GTPase_activation_prot"/>
</dbReference>
<dbReference type="InterPro" id="IPR000198">
    <property type="entry name" value="RhoGAP_dom"/>
</dbReference>
<dbReference type="InterPro" id="IPR001781">
    <property type="entry name" value="Znf_LIM"/>
</dbReference>
<dbReference type="PANTHER" id="PTHR23176:SF121">
    <property type="entry name" value="RHO-TYPE GTPASE-ACTIVATING PROTEIN 1-RELATED"/>
    <property type="match status" value="1"/>
</dbReference>
<dbReference type="PANTHER" id="PTHR23176">
    <property type="entry name" value="RHO/RAC/CDC GTPASE-ACTIVATING PROTEIN"/>
    <property type="match status" value="1"/>
</dbReference>
<dbReference type="Pfam" id="PF00412">
    <property type="entry name" value="LIM"/>
    <property type="match status" value="1"/>
</dbReference>
<dbReference type="Pfam" id="PF00620">
    <property type="entry name" value="RhoGAP"/>
    <property type="match status" value="1"/>
</dbReference>
<dbReference type="SMART" id="SM00132">
    <property type="entry name" value="LIM"/>
    <property type="match status" value="2"/>
</dbReference>
<dbReference type="SMART" id="SM00324">
    <property type="entry name" value="RhoGAP"/>
    <property type="match status" value="1"/>
</dbReference>
<dbReference type="SUPFAM" id="SSF48350">
    <property type="entry name" value="GTPase activation domain, GAP"/>
    <property type="match status" value="1"/>
</dbReference>
<dbReference type="PROSITE" id="PS00478">
    <property type="entry name" value="LIM_DOMAIN_1"/>
    <property type="match status" value="1"/>
</dbReference>
<dbReference type="PROSITE" id="PS50023">
    <property type="entry name" value="LIM_DOMAIN_2"/>
    <property type="match status" value="2"/>
</dbReference>
<dbReference type="PROSITE" id="PS50238">
    <property type="entry name" value="RHOGAP"/>
    <property type="match status" value="1"/>
</dbReference>
<keyword id="KW-0343">GTPase activation</keyword>
<keyword id="KW-0440">LIM domain</keyword>
<keyword id="KW-0479">Metal-binding</keyword>
<keyword id="KW-0589">Pheromone response</keyword>
<keyword id="KW-0597">Phosphoprotein</keyword>
<keyword id="KW-1185">Reference proteome</keyword>
<keyword id="KW-0677">Repeat</keyword>
<keyword id="KW-0862">Zinc</keyword>
<accession>P39083</accession>
<accession>D6W2I5</accession>
<accession>P39934</accession>
<organism>
    <name type="scientific">Saccharomyces cerevisiae (strain ATCC 204508 / S288c)</name>
    <name type="common">Baker's yeast</name>
    <dbReference type="NCBI Taxonomy" id="559292"/>
    <lineage>
        <taxon>Eukaryota</taxon>
        <taxon>Fungi</taxon>
        <taxon>Dikarya</taxon>
        <taxon>Ascomycota</taxon>
        <taxon>Saccharomycotina</taxon>
        <taxon>Saccharomycetes</taxon>
        <taxon>Saccharomycetales</taxon>
        <taxon>Saccharomycetaceae</taxon>
        <taxon>Saccharomyces</taxon>
    </lineage>
</organism>
<comment type="function">
    <text>GTPase-activating protein (GAP) for CDC42 and/or RHO1. Negative regulator of the pheromone-response pathway through the STE20 protein kinase; acts at a step between the G-protein and the MAP kinase module. Dominant suppressor of bud emergence defect caused by deletion of IPL2/BEM2. Involved in the control of polarized cell growth and proper bud site selection.</text>
</comment>
<comment type="interaction">
    <interactant intactId="EBI-15044">
        <id>P39083</id>
    </interactant>
    <interactant intactId="EBI-31494">
        <id>Q12518</id>
        <label>ENT1</label>
    </interactant>
    <organismsDiffer>false</organismsDiffer>
    <experiments>3</experiments>
</comment>
<comment type="interaction">
    <interactant intactId="EBI-15044">
        <id>P39083</id>
    </interactant>
    <interactant intactId="EBI-35928">
        <id>Q05785</id>
        <label>ENT2</label>
    </interactant>
    <organismsDiffer>false</organismsDiffer>
    <experiments>2</experiments>
</comment>
<comment type="interaction">
    <interactant intactId="EBI-15044">
        <id>P39083</id>
    </interactant>
    <interactant intactId="EBI-18140">
        <id>P40073</id>
        <label>SHO1</label>
    </interactant>
    <organismsDiffer>false</organismsDiffer>
    <experiments>2</experiments>
</comment>
<comment type="interaction">
    <interactant intactId="EBI-15044">
        <id>P39083</id>
    </interactant>
    <interactant intactId="EBI-7066728">
        <id>O88339</id>
        <label>Epn1</label>
    </interactant>
    <organismsDiffer>true</organismsDiffer>
    <experiments>2</experiments>
</comment>
<comment type="miscellaneous">
    <text evidence="4">Present with 396 molecules/cell in log phase SD medium.</text>
</comment>
<evidence type="ECO:0000255" key="1">
    <source>
        <dbReference type="PROSITE-ProRule" id="PRU00125"/>
    </source>
</evidence>
<evidence type="ECO:0000255" key="2">
    <source>
        <dbReference type="PROSITE-ProRule" id="PRU00172"/>
    </source>
</evidence>
<evidence type="ECO:0000256" key="3">
    <source>
        <dbReference type="SAM" id="MobiDB-lite"/>
    </source>
</evidence>
<evidence type="ECO:0000269" key="4">
    <source>
    </source>
</evidence>
<evidence type="ECO:0000269" key="5">
    <source>
    </source>
</evidence>
<evidence type="ECO:0000305" key="6"/>
<evidence type="ECO:0007744" key="7">
    <source>
    </source>
</evidence>
<evidence type="ECO:0007744" key="8">
    <source>
    </source>
</evidence>
<evidence type="ECO:0007744" key="9">
    <source>
    </source>
</evidence>
<protein>
    <recommendedName>
        <fullName>Rho-type GTPase-activating protein 1</fullName>
    </recommendedName>
</protein>
<proteinExistence type="evidence at protein level"/>
<gene>
    <name type="primary">RGA1</name>
    <name type="synonym">DBM1</name>
    <name type="synonym">THE1</name>
    <name type="ordered locus">YOR127W</name>
    <name type="ORF">O3290</name>
    <name type="ORF">YOR3290W</name>
</gene>
<sequence length="1007" mass="112832">MASTAPNEQFPSCVRCKEFITTGHAYELGCDRWHTHCFACYKCEKPLSCESDFLVLGTGALICFDCSDSCKNCGKKIDDLAIILSSSNEAYCSDCFKCCKCGENIADLRYAKTKRGLFCLSCHEKLLAKRKYYEEKKRRLKKNLPSLPTPVIDNGHTDEVSASAVLPEKTFSRPASLVNEIPSGSEPSKDIETNSSDIVPHFITGYNDSDDNSGSSKFGSNVSIDVIGPEENSTEHVNDDVKEEAEAPSANMSLNVATDPTLSCKEPPSHSRNLLNKTPLRNSSGQYLAKSPSSYRQGIIVNDSLEESDQIDPPNNSSRNASELLTSVLHSPVSVNMKNPKGSNTDIFNTGEISQMDPSLSRKVLNNIVEETNALQRPVVEVVKEDRSVPDLAGVQQEQAEKYSYSNNSGKGRKISRSLSRRSKDLMINLKSRATGKQDSNVKLSPASKVTSRRSQDLMRDNDSHTGLDTPNSNSTSLDILVNNQKSLNYKRFTDNGTLRVTSGKETALEEQKNHSFKSPSPIDHLLQSPATPSNVSMYRTPPLDSSLTFDRRNGSSYSNQNYSIPSWQKTPKTQLENSDNFEEQKETLYENSESRNDPSLDKEIVTAEHYLKQLKINLKELESQREELMKEITEMKSMKEALRRHIESYNSEKNKLYLDSNELSNNPPMINEISLGESPPVKHVATASSVARSSVKPKFWKFFSSAKPQTEQSIQGVSTNNTNSIVKSAPVLLSAPSSGSNSGRLEISPPVLQNPNEFSDVRLVPIENDANMGQSKDGEEYLDGSNLYGSSLVARCNYENNEIPMILSVCIDFIESDEENMRSEGIYRKSGSQLVIEEIEKQFSAWKVQQNTETPNILTEQDLNVVTGVLKRYLRKLPNPIFTFQIYEPLMRLVKSKKMMENLPFVGGKLSLEAKNSDTYMSSKSALKNILEDLPREHYRVLRVLSEHIEKVTRYSHWNRMTLYNLALVFAPGLIRDFSGEKDIIDMKERNYIVAFIFGNYKDILT</sequence>
<feature type="chain" id="PRO_0000075899" description="Rho-type GTPase-activating protein 1">
    <location>
        <begin position="1"/>
        <end position="1007"/>
    </location>
</feature>
<feature type="domain" description="LIM zinc-binding 1" evidence="1">
    <location>
        <begin position="13"/>
        <end position="66"/>
    </location>
</feature>
<feature type="domain" description="LIM zinc-binding 2" evidence="1">
    <location>
        <begin position="70"/>
        <end position="122"/>
    </location>
</feature>
<feature type="domain" description="Rho-GAP" evidence="2">
    <location>
        <begin position="791"/>
        <end position="1006"/>
    </location>
</feature>
<feature type="region of interest" description="Disordered" evidence="3">
    <location>
        <begin position="203"/>
        <end position="293"/>
    </location>
</feature>
<feature type="region of interest" description="Disordered" evidence="3">
    <location>
        <begin position="401"/>
        <end position="478"/>
    </location>
</feature>
<feature type="region of interest" description="Disordered" evidence="3">
    <location>
        <begin position="505"/>
        <end position="600"/>
    </location>
</feature>
<feature type="compositionally biased region" description="Low complexity" evidence="3">
    <location>
        <begin position="212"/>
        <end position="221"/>
    </location>
</feature>
<feature type="compositionally biased region" description="Polar residues" evidence="3">
    <location>
        <begin position="250"/>
        <end position="261"/>
    </location>
</feature>
<feature type="compositionally biased region" description="Polar residues" evidence="3">
    <location>
        <begin position="270"/>
        <end position="293"/>
    </location>
</feature>
<feature type="compositionally biased region" description="Basic residues" evidence="3">
    <location>
        <begin position="411"/>
        <end position="421"/>
    </location>
</feature>
<feature type="compositionally biased region" description="Basic and acidic residues" evidence="3">
    <location>
        <begin position="454"/>
        <end position="466"/>
    </location>
</feature>
<feature type="compositionally biased region" description="Polar residues" evidence="3">
    <location>
        <begin position="467"/>
        <end position="478"/>
    </location>
</feature>
<feature type="compositionally biased region" description="Polar residues" evidence="3">
    <location>
        <begin position="529"/>
        <end position="579"/>
    </location>
</feature>
<feature type="compositionally biased region" description="Basic and acidic residues" evidence="3">
    <location>
        <begin position="583"/>
        <end position="600"/>
    </location>
</feature>
<feature type="site" description="Arginine finger; crucial for GTP hydrolysis by stabilizing the transition state" evidence="2">
    <location>
        <position position="829"/>
    </location>
</feature>
<feature type="modified residue" description="Phosphothreonine" evidence="7 8 9">
    <location>
        <position position="278"/>
    </location>
</feature>
<feature type="modified residue" description="Phosphoserine" evidence="9">
    <location>
        <position position="291"/>
    </location>
</feature>
<feature type="modified residue" description="Phosphothreonine" evidence="9">
    <location>
        <position position="532"/>
    </location>
</feature>
<feature type="sequence variant">
    <original>V</original>
    <variation>A</variation>
    <location>
        <position position="866"/>
    </location>
</feature>
<feature type="sequence variant">
    <original>K</original>
    <variation>R</variation>
    <location>
        <position position="898"/>
    </location>
</feature>
<feature type="sequence variant">
    <original>S</original>
    <variation>G</variation>
    <location>
        <position position="926"/>
    </location>
</feature>
<feature type="mutagenesis site" description="Bipolar budding." evidence="5">
    <original>C</original>
    <variation>S</variation>
    <location>
        <position position="37"/>
    </location>
</feature>
<feature type="mutagenesis site" description="Bipolar budding." evidence="5">
    <original>C</original>
    <variation>S</variation>
    <location>
        <position position="40"/>
    </location>
</feature>
<feature type="mutagenesis site" description="Bipolar budding." evidence="5">
    <original>C</original>
    <variation>S</variation>
    <location>
        <position position="98"/>
    </location>
</feature>
<feature type="mutagenesis site" description="Bipolar budding." evidence="5">
    <original>C</original>
    <variation>S</variation>
    <location>
        <position position="101"/>
    </location>
</feature>
<feature type="sequence conflict" description="In Ref. 2; CAA62445." evidence="6" ref="2">
    <original>D</original>
    <variation>E</variation>
    <location>
        <position position="457"/>
    </location>
</feature>
<feature type="sequence conflict" description="In Ref. 2; CAA62445." evidence="6" ref="2">
    <original>T</original>
    <variation>P</variation>
    <location>
        <position position="507"/>
    </location>
</feature>
<name>RGA1_YEAST</name>